<comment type="catalytic activity">
    <reaction evidence="1">
        <text>D-glucose + ATP = D-glucose 6-phosphate + ADP + H(+)</text>
        <dbReference type="Rhea" id="RHEA:17825"/>
        <dbReference type="ChEBI" id="CHEBI:4167"/>
        <dbReference type="ChEBI" id="CHEBI:15378"/>
        <dbReference type="ChEBI" id="CHEBI:30616"/>
        <dbReference type="ChEBI" id="CHEBI:61548"/>
        <dbReference type="ChEBI" id="CHEBI:456216"/>
        <dbReference type="EC" id="2.7.1.2"/>
    </reaction>
</comment>
<comment type="subcellular location">
    <subcellularLocation>
        <location evidence="1">Cytoplasm</location>
    </subcellularLocation>
</comment>
<comment type="similarity">
    <text evidence="1">Belongs to the bacterial glucokinase family.</text>
</comment>
<organism>
    <name type="scientific">Brucella abortus biovar 1 (strain 9-941)</name>
    <dbReference type="NCBI Taxonomy" id="262698"/>
    <lineage>
        <taxon>Bacteria</taxon>
        <taxon>Pseudomonadati</taxon>
        <taxon>Pseudomonadota</taxon>
        <taxon>Alphaproteobacteria</taxon>
        <taxon>Hyphomicrobiales</taxon>
        <taxon>Brucellaceae</taxon>
        <taxon>Brucella/Ochrobactrum group</taxon>
        <taxon>Brucella</taxon>
    </lineage>
</organism>
<keyword id="KW-0067">ATP-binding</keyword>
<keyword id="KW-0963">Cytoplasm</keyword>
<keyword id="KW-0324">Glycolysis</keyword>
<keyword id="KW-0418">Kinase</keyword>
<keyword id="KW-0547">Nucleotide-binding</keyword>
<keyword id="KW-0808">Transferase</keyword>
<gene>
    <name evidence="1" type="primary">glk</name>
    <name type="ordered locus">BruAb2_0989</name>
</gene>
<feature type="chain" id="PRO_0000215120" description="Glucokinase">
    <location>
        <begin position="1"/>
        <end position="343"/>
    </location>
</feature>
<feature type="binding site" evidence="1">
    <location>
        <begin position="18"/>
        <end position="23"/>
    </location>
    <ligand>
        <name>ATP</name>
        <dbReference type="ChEBI" id="CHEBI:30616"/>
    </ligand>
</feature>
<dbReference type="EC" id="2.7.1.2" evidence="1"/>
<dbReference type="EMBL" id="AE017224">
    <property type="protein sequence ID" value="AAX76368.1"/>
    <property type="molecule type" value="Genomic_DNA"/>
</dbReference>
<dbReference type="RefSeq" id="WP_002967381.1">
    <property type="nucleotide sequence ID" value="NC_006933.1"/>
</dbReference>
<dbReference type="SMR" id="P0CB37"/>
<dbReference type="EnsemblBacteria" id="AAX76368">
    <property type="protein sequence ID" value="AAX76368"/>
    <property type="gene ID" value="BruAb2_0989"/>
</dbReference>
<dbReference type="KEGG" id="bmb:BruAb2_0989"/>
<dbReference type="HOGENOM" id="CLU_042582_1_0_5"/>
<dbReference type="Proteomes" id="UP000000540">
    <property type="component" value="Chromosome II"/>
</dbReference>
<dbReference type="GO" id="GO:0005829">
    <property type="term" value="C:cytosol"/>
    <property type="evidence" value="ECO:0007669"/>
    <property type="project" value="TreeGrafter"/>
</dbReference>
<dbReference type="GO" id="GO:0005524">
    <property type="term" value="F:ATP binding"/>
    <property type="evidence" value="ECO:0007669"/>
    <property type="project" value="UniProtKB-UniRule"/>
</dbReference>
<dbReference type="GO" id="GO:0005536">
    <property type="term" value="F:D-glucose binding"/>
    <property type="evidence" value="ECO:0007669"/>
    <property type="project" value="InterPro"/>
</dbReference>
<dbReference type="GO" id="GO:0004340">
    <property type="term" value="F:glucokinase activity"/>
    <property type="evidence" value="ECO:0007669"/>
    <property type="project" value="UniProtKB-UniRule"/>
</dbReference>
<dbReference type="GO" id="GO:0006096">
    <property type="term" value="P:glycolytic process"/>
    <property type="evidence" value="ECO:0007669"/>
    <property type="project" value="UniProtKB-UniRule"/>
</dbReference>
<dbReference type="CDD" id="cd24008">
    <property type="entry name" value="ASKHA_NBD_GLK"/>
    <property type="match status" value="1"/>
</dbReference>
<dbReference type="Gene3D" id="3.30.420.40">
    <property type="match status" value="1"/>
</dbReference>
<dbReference type="Gene3D" id="3.40.367.20">
    <property type="match status" value="1"/>
</dbReference>
<dbReference type="HAMAP" id="MF_00524">
    <property type="entry name" value="Glucokinase"/>
    <property type="match status" value="1"/>
</dbReference>
<dbReference type="InterPro" id="IPR043129">
    <property type="entry name" value="ATPase_NBD"/>
</dbReference>
<dbReference type="InterPro" id="IPR050201">
    <property type="entry name" value="Bacterial_glucokinase"/>
</dbReference>
<dbReference type="InterPro" id="IPR003836">
    <property type="entry name" value="Glucokinase"/>
</dbReference>
<dbReference type="NCBIfam" id="TIGR00749">
    <property type="entry name" value="glk"/>
    <property type="match status" value="1"/>
</dbReference>
<dbReference type="NCBIfam" id="NF001417">
    <property type="entry name" value="PRK00292.1-4"/>
    <property type="match status" value="1"/>
</dbReference>
<dbReference type="PANTHER" id="PTHR47690">
    <property type="entry name" value="GLUCOKINASE"/>
    <property type="match status" value="1"/>
</dbReference>
<dbReference type="PANTHER" id="PTHR47690:SF1">
    <property type="entry name" value="GLUCOKINASE"/>
    <property type="match status" value="1"/>
</dbReference>
<dbReference type="Pfam" id="PF02685">
    <property type="entry name" value="Glucokinase"/>
    <property type="match status" value="1"/>
</dbReference>
<dbReference type="SUPFAM" id="SSF53067">
    <property type="entry name" value="Actin-like ATPase domain"/>
    <property type="match status" value="1"/>
</dbReference>
<reference key="1">
    <citation type="journal article" date="2005" name="J. Bacteriol.">
        <title>Completion of the genome sequence of Brucella abortus and comparison to the highly similar genomes of Brucella melitensis and Brucella suis.</title>
        <authorList>
            <person name="Halling S.M."/>
            <person name="Peterson-Burch B.D."/>
            <person name="Bricker B.J."/>
            <person name="Zuerner R.L."/>
            <person name="Qing Z."/>
            <person name="Li L.-L."/>
            <person name="Kapur V."/>
            <person name="Alt D.P."/>
            <person name="Olsen S.C."/>
        </authorList>
    </citation>
    <scope>NUCLEOTIDE SEQUENCE [LARGE SCALE GENOMIC DNA]</scope>
    <source>
        <strain>9-941</strain>
    </source>
</reference>
<protein>
    <recommendedName>
        <fullName evidence="1">Glucokinase</fullName>
        <ecNumber evidence="1">2.7.1.2</ecNumber>
    </recommendedName>
    <alternativeName>
        <fullName evidence="1">Glucose kinase</fullName>
    </alternativeName>
</protein>
<proteinExistence type="inferred from homology"/>
<evidence type="ECO:0000255" key="1">
    <source>
        <dbReference type="HAMAP-Rule" id="MF_00524"/>
    </source>
</evidence>
<accession>P0CB37</accession>
<accession>Q576R6</accession>
<accession>Q59171</accession>
<name>GLK_BRUAB</name>
<sequence length="343" mass="37073">MQAIIDAEQSFKFPVLVGDIGGTNARFSILVDSNAEPKEFPVLQTADYATIDEAIQHAILDQTAIQPRSVILAVAGPVDGDEIDLTNCDWVVRPKKMIADLGFEDVTVLNDFEAQALAVVSLEGHHMEQIGGKPEEAVATRVVLGPGTGLGVAGLFRTRHAWVPVPGEGGHIDIGPRTERDYQIFPHIERIEGRVTGEQILSGRGLRNLYLGICAADKITPTLETPVDITSAGLDGSNPQAAETLDLFATYLGRLAGDLALIFMAHGGVYLSGGIPVRILSALKAGSFRATFEDKAPHKAIMRDIPVRVITYQLAALTGLSAFARTPSRFEVSTEGRRWRMRR</sequence>